<dbReference type="EMBL" id="CP001108">
    <property type="protein sequence ID" value="ACF45233.1"/>
    <property type="molecule type" value="Genomic_DNA"/>
</dbReference>
<dbReference type="RefSeq" id="WP_012504770.1">
    <property type="nucleotide sequence ID" value="NC_011059.1"/>
</dbReference>
<dbReference type="SMR" id="B4S3N7"/>
<dbReference type="STRING" id="290512.Paes_0174"/>
<dbReference type="KEGG" id="paa:Paes_0174"/>
<dbReference type="eggNOG" id="COG0236">
    <property type="taxonomic scope" value="Bacteria"/>
</dbReference>
<dbReference type="HOGENOM" id="CLU_108696_5_1_10"/>
<dbReference type="UniPathway" id="UPA00094"/>
<dbReference type="Proteomes" id="UP000002725">
    <property type="component" value="Chromosome"/>
</dbReference>
<dbReference type="GO" id="GO:0005829">
    <property type="term" value="C:cytosol"/>
    <property type="evidence" value="ECO:0007669"/>
    <property type="project" value="TreeGrafter"/>
</dbReference>
<dbReference type="GO" id="GO:0016020">
    <property type="term" value="C:membrane"/>
    <property type="evidence" value="ECO:0007669"/>
    <property type="project" value="GOC"/>
</dbReference>
<dbReference type="GO" id="GO:0000035">
    <property type="term" value="F:acyl binding"/>
    <property type="evidence" value="ECO:0007669"/>
    <property type="project" value="TreeGrafter"/>
</dbReference>
<dbReference type="GO" id="GO:0000036">
    <property type="term" value="F:acyl carrier activity"/>
    <property type="evidence" value="ECO:0007669"/>
    <property type="project" value="UniProtKB-UniRule"/>
</dbReference>
<dbReference type="GO" id="GO:0009245">
    <property type="term" value="P:lipid A biosynthetic process"/>
    <property type="evidence" value="ECO:0007669"/>
    <property type="project" value="TreeGrafter"/>
</dbReference>
<dbReference type="FunFam" id="1.10.1200.10:FF:000003">
    <property type="entry name" value="Acyl carrier protein"/>
    <property type="match status" value="1"/>
</dbReference>
<dbReference type="Gene3D" id="1.10.1200.10">
    <property type="entry name" value="ACP-like"/>
    <property type="match status" value="1"/>
</dbReference>
<dbReference type="HAMAP" id="MF_01217">
    <property type="entry name" value="Acyl_carrier"/>
    <property type="match status" value="1"/>
</dbReference>
<dbReference type="InterPro" id="IPR003231">
    <property type="entry name" value="ACP"/>
</dbReference>
<dbReference type="InterPro" id="IPR036736">
    <property type="entry name" value="ACP-like_sf"/>
</dbReference>
<dbReference type="InterPro" id="IPR009081">
    <property type="entry name" value="PP-bd_ACP"/>
</dbReference>
<dbReference type="InterPro" id="IPR006162">
    <property type="entry name" value="Ppantetheine_attach_site"/>
</dbReference>
<dbReference type="NCBIfam" id="TIGR00517">
    <property type="entry name" value="acyl_carrier"/>
    <property type="match status" value="1"/>
</dbReference>
<dbReference type="NCBIfam" id="NF002148">
    <property type="entry name" value="PRK00982.1-2"/>
    <property type="match status" value="1"/>
</dbReference>
<dbReference type="NCBIfam" id="NF002149">
    <property type="entry name" value="PRK00982.1-3"/>
    <property type="match status" value="1"/>
</dbReference>
<dbReference type="NCBIfam" id="NF002150">
    <property type="entry name" value="PRK00982.1-4"/>
    <property type="match status" value="1"/>
</dbReference>
<dbReference type="NCBIfam" id="NF002151">
    <property type="entry name" value="PRK00982.1-5"/>
    <property type="match status" value="1"/>
</dbReference>
<dbReference type="PANTHER" id="PTHR20863">
    <property type="entry name" value="ACYL CARRIER PROTEIN"/>
    <property type="match status" value="1"/>
</dbReference>
<dbReference type="PANTHER" id="PTHR20863:SF76">
    <property type="entry name" value="CARRIER DOMAIN-CONTAINING PROTEIN"/>
    <property type="match status" value="1"/>
</dbReference>
<dbReference type="Pfam" id="PF00550">
    <property type="entry name" value="PP-binding"/>
    <property type="match status" value="1"/>
</dbReference>
<dbReference type="SUPFAM" id="SSF47336">
    <property type="entry name" value="ACP-like"/>
    <property type="match status" value="1"/>
</dbReference>
<dbReference type="PROSITE" id="PS50075">
    <property type="entry name" value="CARRIER"/>
    <property type="match status" value="1"/>
</dbReference>
<dbReference type="PROSITE" id="PS00012">
    <property type="entry name" value="PHOSPHOPANTETHEINE"/>
    <property type="match status" value="1"/>
</dbReference>
<gene>
    <name evidence="1" type="primary">acpP</name>
    <name type="ordered locus">Paes_0174</name>
</gene>
<reference key="1">
    <citation type="submission" date="2008-06" db="EMBL/GenBank/DDBJ databases">
        <title>Complete sequence of chromosome of Prosthecochloris aestuarii DSM 271.</title>
        <authorList>
            <consortium name="US DOE Joint Genome Institute"/>
            <person name="Lucas S."/>
            <person name="Copeland A."/>
            <person name="Lapidus A."/>
            <person name="Glavina del Rio T."/>
            <person name="Dalin E."/>
            <person name="Tice H."/>
            <person name="Bruce D."/>
            <person name="Goodwin L."/>
            <person name="Pitluck S."/>
            <person name="Schmutz J."/>
            <person name="Larimer F."/>
            <person name="Land M."/>
            <person name="Hauser L."/>
            <person name="Kyrpides N."/>
            <person name="Anderson I."/>
            <person name="Liu Z."/>
            <person name="Li T."/>
            <person name="Zhao F."/>
            <person name="Overmann J."/>
            <person name="Bryant D.A."/>
            <person name="Richardson P."/>
        </authorList>
    </citation>
    <scope>NUCLEOTIDE SEQUENCE [LARGE SCALE GENOMIC DNA]</scope>
    <source>
        <strain>DSM 271 / SK 413</strain>
    </source>
</reference>
<feature type="chain" id="PRO_1000139052" description="Acyl carrier protein">
    <location>
        <begin position="1"/>
        <end position="80"/>
    </location>
</feature>
<feature type="domain" description="Carrier" evidence="2">
    <location>
        <begin position="4"/>
        <end position="79"/>
    </location>
</feature>
<feature type="modified residue" description="O-(pantetheine 4'-phosphoryl)serine" evidence="2">
    <location>
        <position position="39"/>
    </location>
</feature>
<proteinExistence type="inferred from homology"/>
<name>ACP_PROA2</name>
<accession>B4S3N7</accession>
<comment type="function">
    <text evidence="1">Carrier of the growing fatty acid chain in fatty acid biosynthesis.</text>
</comment>
<comment type="pathway">
    <text evidence="1">Lipid metabolism; fatty acid biosynthesis.</text>
</comment>
<comment type="subcellular location">
    <subcellularLocation>
        <location evidence="1">Cytoplasm</location>
    </subcellularLocation>
</comment>
<comment type="PTM">
    <text evidence="1">4'-phosphopantetheine is transferred from CoA to a specific serine of apo-ACP by AcpS. This modification is essential for activity because fatty acids are bound in thioester linkage to the sulfhydryl of the prosthetic group.</text>
</comment>
<comment type="similarity">
    <text evidence="1">Belongs to the acyl carrier protein (ACP) family.</text>
</comment>
<protein>
    <recommendedName>
        <fullName evidence="1">Acyl carrier protein</fullName>
        <shortName evidence="1">ACP</shortName>
    </recommendedName>
</protein>
<keyword id="KW-0963">Cytoplasm</keyword>
<keyword id="KW-0275">Fatty acid biosynthesis</keyword>
<keyword id="KW-0276">Fatty acid metabolism</keyword>
<keyword id="KW-0444">Lipid biosynthesis</keyword>
<keyword id="KW-0443">Lipid metabolism</keyword>
<keyword id="KW-0596">Phosphopantetheine</keyword>
<keyword id="KW-0597">Phosphoprotein</keyword>
<evidence type="ECO:0000255" key="1">
    <source>
        <dbReference type="HAMAP-Rule" id="MF_01217"/>
    </source>
</evidence>
<evidence type="ECO:0000255" key="2">
    <source>
        <dbReference type="PROSITE-ProRule" id="PRU00258"/>
    </source>
</evidence>
<organism>
    <name type="scientific">Prosthecochloris aestuarii (strain DSM 271 / SK 413)</name>
    <dbReference type="NCBI Taxonomy" id="290512"/>
    <lineage>
        <taxon>Bacteria</taxon>
        <taxon>Pseudomonadati</taxon>
        <taxon>Chlorobiota</taxon>
        <taxon>Chlorobiia</taxon>
        <taxon>Chlorobiales</taxon>
        <taxon>Chlorobiaceae</taxon>
        <taxon>Prosthecochloris</taxon>
    </lineage>
</organism>
<sequence>MNVEEIKDKVFDIIVSKMGVNKDQIKTESKFADDLGADSLDTVELIMELENEFDVQIPDEDAEKISNVQQAIDYIVNAKK</sequence>